<proteinExistence type="inferred from homology"/>
<gene>
    <name evidence="2" type="primary">ddl</name>
    <name type="synonym">ddlA</name>
    <name type="ordered locus">Cj0798c</name>
</gene>
<accession>Q9PPC2</accession>
<accession>Q0PA92</accession>
<sequence length="346" mass="39908">MKFAILFGGNSYEHEISIVSAVVLKKVINQNLEFIFCDEERRFYHIPSEKMNSKTFSTKAYKKEKELFIKQGGFFSKGFLKENKLECECVINLIHGRDGEDGKIAALFEFYSIKFIGPRLEASVLSFNKELTKLYAKSVGVKTLDYTILRKNQNSKEKLSFPCIIKPARLGSSIGISIVKDEKDLEYAKDVGFEFDNDLVVEEFKNNIKEYNLAGCMINDEFVFSIIEEPKKKEFLDFEQKYLSFSGHNELIEADLSEELKEKLKDSFKKIYNPLFKGALIRCDFFILDNEIYLNEINPNPGSLANYLFKDFNTTLNALADQISLEKMIKINYNFLHSINGQKGKL</sequence>
<name>DDL_CAMJE</name>
<reference key="1">
    <citation type="journal article" date="2000" name="Nature">
        <title>The genome sequence of the food-borne pathogen Campylobacter jejuni reveals hypervariable sequences.</title>
        <authorList>
            <person name="Parkhill J."/>
            <person name="Wren B.W."/>
            <person name="Mungall K.L."/>
            <person name="Ketley J.M."/>
            <person name="Churcher C.M."/>
            <person name="Basham D."/>
            <person name="Chillingworth T."/>
            <person name="Davies R.M."/>
            <person name="Feltwell T."/>
            <person name="Holroyd S."/>
            <person name="Jagels K."/>
            <person name="Karlyshev A.V."/>
            <person name="Moule S."/>
            <person name="Pallen M.J."/>
            <person name="Penn C.W."/>
            <person name="Quail M.A."/>
            <person name="Rajandream M.A."/>
            <person name="Rutherford K.M."/>
            <person name="van Vliet A.H.M."/>
            <person name="Whitehead S."/>
            <person name="Barrell B.G."/>
        </authorList>
    </citation>
    <scope>NUCLEOTIDE SEQUENCE [LARGE SCALE GENOMIC DNA]</scope>
    <source>
        <strain>ATCC 700819 / NCTC 11168</strain>
    </source>
</reference>
<evidence type="ECO:0000250" key="1"/>
<evidence type="ECO:0000255" key="2">
    <source>
        <dbReference type="HAMAP-Rule" id="MF_00047"/>
    </source>
</evidence>
<dbReference type="EC" id="6.3.2.4" evidence="2"/>
<dbReference type="EMBL" id="AL111168">
    <property type="protein sequence ID" value="CAL34926.1"/>
    <property type="molecule type" value="Genomic_DNA"/>
</dbReference>
<dbReference type="PIR" id="F81351">
    <property type="entry name" value="F81351"/>
</dbReference>
<dbReference type="RefSeq" id="WP_002852516.1">
    <property type="nucleotide sequence ID" value="NZ_SZUC01000001.1"/>
</dbReference>
<dbReference type="RefSeq" id="YP_002344205.1">
    <property type="nucleotide sequence ID" value="NC_002163.1"/>
</dbReference>
<dbReference type="SMR" id="Q9PPC2"/>
<dbReference type="STRING" id="192222.Cj0798c"/>
<dbReference type="PaxDb" id="192222-Cj0798c"/>
<dbReference type="EnsemblBacteria" id="CAL34926">
    <property type="protein sequence ID" value="CAL34926"/>
    <property type="gene ID" value="Cj0798c"/>
</dbReference>
<dbReference type="GeneID" id="905128"/>
<dbReference type="KEGG" id="cje:Cj0798c"/>
<dbReference type="PATRIC" id="fig|192222.6.peg.786"/>
<dbReference type="eggNOG" id="COG1181">
    <property type="taxonomic scope" value="Bacteria"/>
</dbReference>
<dbReference type="HOGENOM" id="CLU_039268_0_2_7"/>
<dbReference type="OrthoDB" id="9813261at2"/>
<dbReference type="UniPathway" id="UPA00219"/>
<dbReference type="Proteomes" id="UP000000799">
    <property type="component" value="Chromosome"/>
</dbReference>
<dbReference type="GO" id="GO:0005737">
    <property type="term" value="C:cytoplasm"/>
    <property type="evidence" value="ECO:0007669"/>
    <property type="project" value="UniProtKB-SubCell"/>
</dbReference>
<dbReference type="GO" id="GO:0005524">
    <property type="term" value="F:ATP binding"/>
    <property type="evidence" value="ECO:0007669"/>
    <property type="project" value="UniProtKB-KW"/>
</dbReference>
<dbReference type="GO" id="GO:0008716">
    <property type="term" value="F:D-alanine-D-alanine ligase activity"/>
    <property type="evidence" value="ECO:0007669"/>
    <property type="project" value="UniProtKB-UniRule"/>
</dbReference>
<dbReference type="GO" id="GO:0046872">
    <property type="term" value="F:metal ion binding"/>
    <property type="evidence" value="ECO:0007669"/>
    <property type="project" value="UniProtKB-KW"/>
</dbReference>
<dbReference type="GO" id="GO:0071555">
    <property type="term" value="P:cell wall organization"/>
    <property type="evidence" value="ECO:0007669"/>
    <property type="project" value="UniProtKB-KW"/>
</dbReference>
<dbReference type="GO" id="GO:0009252">
    <property type="term" value="P:peptidoglycan biosynthetic process"/>
    <property type="evidence" value="ECO:0007669"/>
    <property type="project" value="UniProtKB-UniRule"/>
</dbReference>
<dbReference type="GO" id="GO:0008360">
    <property type="term" value="P:regulation of cell shape"/>
    <property type="evidence" value="ECO:0007669"/>
    <property type="project" value="UniProtKB-KW"/>
</dbReference>
<dbReference type="Gene3D" id="3.40.50.20">
    <property type="match status" value="1"/>
</dbReference>
<dbReference type="Gene3D" id="3.30.1490.20">
    <property type="entry name" value="ATP-grasp fold, A domain"/>
    <property type="match status" value="1"/>
</dbReference>
<dbReference type="Gene3D" id="3.30.470.20">
    <property type="entry name" value="ATP-grasp fold, B domain"/>
    <property type="match status" value="1"/>
</dbReference>
<dbReference type="HAMAP" id="MF_00047">
    <property type="entry name" value="Dala_Dala_lig"/>
    <property type="match status" value="1"/>
</dbReference>
<dbReference type="InterPro" id="IPR011761">
    <property type="entry name" value="ATP-grasp"/>
</dbReference>
<dbReference type="InterPro" id="IPR013815">
    <property type="entry name" value="ATP_grasp_subdomain_1"/>
</dbReference>
<dbReference type="InterPro" id="IPR000291">
    <property type="entry name" value="D-Ala_lig_Van_CS"/>
</dbReference>
<dbReference type="InterPro" id="IPR005905">
    <property type="entry name" value="D_ala_D_ala"/>
</dbReference>
<dbReference type="InterPro" id="IPR011095">
    <property type="entry name" value="Dala_Dala_lig_C"/>
</dbReference>
<dbReference type="InterPro" id="IPR011127">
    <property type="entry name" value="Dala_Dala_lig_N"/>
</dbReference>
<dbReference type="InterPro" id="IPR016185">
    <property type="entry name" value="PreATP-grasp_dom_sf"/>
</dbReference>
<dbReference type="NCBIfam" id="TIGR01205">
    <property type="entry name" value="D_ala_D_alaTIGR"/>
    <property type="match status" value="1"/>
</dbReference>
<dbReference type="NCBIfam" id="NF002527">
    <property type="entry name" value="PRK01966.1-3"/>
    <property type="match status" value="1"/>
</dbReference>
<dbReference type="PANTHER" id="PTHR23132">
    <property type="entry name" value="D-ALANINE--D-ALANINE LIGASE"/>
    <property type="match status" value="1"/>
</dbReference>
<dbReference type="PANTHER" id="PTHR23132:SF23">
    <property type="entry name" value="D-ALANINE--D-ALANINE LIGASE B"/>
    <property type="match status" value="1"/>
</dbReference>
<dbReference type="Pfam" id="PF07478">
    <property type="entry name" value="Dala_Dala_lig_C"/>
    <property type="match status" value="1"/>
</dbReference>
<dbReference type="Pfam" id="PF01820">
    <property type="entry name" value="Dala_Dala_lig_N"/>
    <property type="match status" value="1"/>
</dbReference>
<dbReference type="SUPFAM" id="SSF56059">
    <property type="entry name" value="Glutathione synthetase ATP-binding domain-like"/>
    <property type="match status" value="1"/>
</dbReference>
<dbReference type="SUPFAM" id="SSF52440">
    <property type="entry name" value="PreATP-grasp domain"/>
    <property type="match status" value="1"/>
</dbReference>
<dbReference type="PROSITE" id="PS50975">
    <property type="entry name" value="ATP_GRASP"/>
    <property type="match status" value="1"/>
</dbReference>
<dbReference type="PROSITE" id="PS00843">
    <property type="entry name" value="DALA_DALA_LIGASE_1"/>
    <property type="match status" value="1"/>
</dbReference>
<dbReference type="PROSITE" id="PS00844">
    <property type="entry name" value="DALA_DALA_LIGASE_2"/>
    <property type="match status" value="1"/>
</dbReference>
<keyword id="KW-0067">ATP-binding</keyword>
<keyword id="KW-0133">Cell shape</keyword>
<keyword id="KW-0961">Cell wall biogenesis/degradation</keyword>
<keyword id="KW-0963">Cytoplasm</keyword>
<keyword id="KW-0436">Ligase</keyword>
<keyword id="KW-0460">Magnesium</keyword>
<keyword id="KW-0464">Manganese</keyword>
<keyword id="KW-0479">Metal-binding</keyword>
<keyword id="KW-0547">Nucleotide-binding</keyword>
<keyword id="KW-0573">Peptidoglycan synthesis</keyword>
<keyword id="KW-1185">Reference proteome</keyword>
<comment type="function">
    <text evidence="2">Cell wall formation.</text>
</comment>
<comment type="catalytic activity">
    <reaction evidence="2">
        <text>2 D-alanine + ATP = D-alanyl-D-alanine + ADP + phosphate + H(+)</text>
        <dbReference type="Rhea" id="RHEA:11224"/>
        <dbReference type="ChEBI" id="CHEBI:15378"/>
        <dbReference type="ChEBI" id="CHEBI:30616"/>
        <dbReference type="ChEBI" id="CHEBI:43474"/>
        <dbReference type="ChEBI" id="CHEBI:57416"/>
        <dbReference type="ChEBI" id="CHEBI:57822"/>
        <dbReference type="ChEBI" id="CHEBI:456216"/>
        <dbReference type="EC" id="6.3.2.4"/>
    </reaction>
</comment>
<comment type="cofactor">
    <cofactor evidence="1">
        <name>Mg(2+)</name>
        <dbReference type="ChEBI" id="CHEBI:18420"/>
    </cofactor>
    <cofactor evidence="1">
        <name>Mn(2+)</name>
        <dbReference type="ChEBI" id="CHEBI:29035"/>
    </cofactor>
    <text evidence="1">Binds 2 magnesium or manganese ions per subunit.</text>
</comment>
<comment type="pathway">
    <text evidence="2">Cell wall biogenesis; peptidoglycan biosynthesis.</text>
</comment>
<comment type="subcellular location">
    <subcellularLocation>
        <location evidence="2">Cytoplasm</location>
    </subcellularLocation>
</comment>
<comment type="similarity">
    <text evidence="2">Belongs to the D-alanine--D-alanine ligase family.</text>
</comment>
<feature type="chain" id="PRO_0000177800" description="D-alanine--D-alanine ligase">
    <location>
        <begin position="1"/>
        <end position="346"/>
    </location>
</feature>
<feature type="domain" description="ATP-grasp" evidence="2">
    <location>
        <begin position="133"/>
        <end position="327"/>
    </location>
</feature>
<feature type="binding site" evidence="2">
    <location>
        <begin position="159"/>
        <end position="211"/>
    </location>
    <ligand>
        <name>ATP</name>
        <dbReference type="ChEBI" id="CHEBI:30616"/>
    </ligand>
</feature>
<feature type="binding site" evidence="2">
    <location>
        <position position="284"/>
    </location>
    <ligand>
        <name>Mg(2+)</name>
        <dbReference type="ChEBI" id="CHEBI:18420"/>
        <label>1</label>
    </ligand>
</feature>
<feature type="binding site" evidence="2">
    <location>
        <position position="296"/>
    </location>
    <ligand>
        <name>Mg(2+)</name>
        <dbReference type="ChEBI" id="CHEBI:18420"/>
        <label>1</label>
    </ligand>
</feature>
<feature type="binding site" evidence="2">
    <location>
        <position position="296"/>
    </location>
    <ligand>
        <name>Mg(2+)</name>
        <dbReference type="ChEBI" id="CHEBI:18420"/>
        <label>2</label>
    </ligand>
</feature>
<feature type="binding site" evidence="2">
    <location>
        <position position="298"/>
    </location>
    <ligand>
        <name>Mg(2+)</name>
        <dbReference type="ChEBI" id="CHEBI:18420"/>
        <label>2</label>
    </ligand>
</feature>
<protein>
    <recommendedName>
        <fullName evidence="2">D-alanine--D-alanine ligase</fullName>
        <ecNumber evidence="2">6.3.2.4</ecNumber>
    </recommendedName>
    <alternativeName>
        <fullName evidence="2">D-Ala-D-Ala ligase</fullName>
    </alternativeName>
    <alternativeName>
        <fullName evidence="2">D-alanylalanine synthetase</fullName>
    </alternativeName>
</protein>
<organism>
    <name type="scientific">Campylobacter jejuni subsp. jejuni serotype O:2 (strain ATCC 700819 / NCTC 11168)</name>
    <dbReference type="NCBI Taxonomy" id="192222"/>
    <lineage>
        <taxon>Bacteria</taxon>
        <taxon>Pseudomonadati</taxon>
        <taxon>Campylobacterota</taxon>
        <taxon>Epsilonproteobacteria</taxon>
        <taxon>Campylobacterales</taxon>
        <taxon>Campylobacteraceae</taxon>
        <taxon>Campylobacter</taxon>
    </lineage>
</organism>